<protein>
    <recommendedName>
        <fullName>Na(+)/H(+) antiporter subunit D</fullName>
    </recommendedName>
    <alternativeName>
        <fullName>Mrp complex subunit D</fullName>
    </alternativeName>
    <alternativeName>
        <fullName>Multiple resistance and pH homeostasis protein D</fullName>
    </alternativeName>
</protein>
<name>MRPD_ALKPO</name>
<evidence type="ECO:0000250" key="1"/>
<evidence type="ECO:0000255" key="2"/>
<evidence type="ECO:0000305" key="3"/>
<feature type="chain" id="PRO_0000217083" description="Na(+)/H(+) antiporter subunit D">
    <location>
        <begin position="1"/>
        <end position="493"/>
    </location>
</feature>
<feature type="transmembrane region" description="Helical" evidence="2">
    <location>
        <begin position="4"/>
        <end position="23"/>
    </location>
</feature>
<feature type="transmembrane region" description="Helical" evidence="2">
    <location>
        <begin position="30"/>
        <end position="52"/>
    </location>
</feature>
<feature type="transmembrane region" description="Helical" evidence="2">
    <location>
        <begin position="72"/>
        <end position="94"/>
    </location>
</feature>
<feature type="transmembrane region" description="Helical" evidence="2">
    <location>
        <begin position="107"/>
        <end position="126"/>
    </location>
</feature>
<feature type="transmembrane region" description="Helical" evidence="2">
    <location>
        <begin position="130"/>
        <end position="149"/>
    </location>
</feature>
<feature type="transmembrane region" description="Helical" evidence="2">
    <location>
        <begin position="162"/>
        <end position="184"/>
    </location>
</feature>
<feature type="transmembrane region" description="Helical" evidence="2">
    <location>
        <begin position="204"/>
        <end position="226"/>
    </location>
</feature>
<feature type="transmembrane region" description="Helical" evidence="2">
    <location>
        <begin position="233"/>
        <end position="255"/>
    </location>
</feature>
<feature type="transmembrane region" description="Helical" evidence="2">
    <location>
        <begin position="270"/>
        <end position="292"/>
    </location>
</feature>
<feature type="transmembrane region" description="Helical" evidence="2">
    <location>
        <begin position="299"/>
        <end position="321"/>
    </location>
</feature>
<feature type="transmembrane region" description="Helical" evidence="2">
    <location>
        <begin position="325"/>
        <end position="347"/>
    </location>
</feature>
<feature type="transmembrane region" description="Helical" evidence="2">
    <location>
        <begin position="368"/>
        <end position="390"/>
    </location>
</feature>
<feature type="transmembrane region" description="Helical" evidence="2">
    <location>
        <begin position="405"/>
        <end position="427"/>
    </location>
</feature>
<feature type="transmembrane region" description="Helical" evidence="2">
    <location>
        <begin position="448"/>
        <end position="470"/>
    </location>
</feature>
<keyword id="KW-0050">Antiport</keyword>
<keyword id="KW-1003">Cell membrane</keyword>
<keyword id="KW-0375">Hydrogen ion transport</keyword>
<keyword id="KW-0406">Ion transport</keyword>
<keyword id="KW-0472">Membrane</keyword>
<keyword id="KW-1185">Reference proteome</keyword>
<keyword id="KW-0915">Sodium</keyword>
<keyword id="KW-0739">Sodium transport</keyword>
<keyword id="KW-0812">Transmembrane</keyword>
<keyword id="KW-1133">Transmembrane helix</keyword>
<keyword id="KW-0813">Transport</keyword>
<reference key="1">
    <citation type="journal article" date="2001" name="FEBS Lett.">
        <title>Mrp-dependent Na(+)/H(+) antiporters of Bacillus exhibit characteristics that are unanticipated for completely secondary active transporters.</title>
        <authorList>
            <person name="Ito M."/>
            <person name="Guffanti A.A."/>
            <person name="Krulwich T.A."/>
        </authorList>
    </citation>
    <scope>NUCLEOTIDE SEQUENCE [GENOMIC DNA]</scope>
    <scope>CHARACTERIZATION</scope>
</reference>
<reference key="2">
    <citation type="submission" date="2003-10" db="EMBL/GenBank/DDBJ databases">
        <authorList>
            <person name="Krulwich T.A."/>
        </authorList>
    </citation>
    <scope>SEQUENCE REVISION TO 400</scope>
</reference>
<reference key="3">
    <citation type="journal article" date="2011" name="Environ. Microbiol.">
        <title>Genome of alkaliphilic Bacillus pseudofirmus OF4 reveals adaptations that support the ability to grow in an external pH range from 7.5 to 11.4.</title>
        <authorList>
            <person name="Janto B."/>
            <person name="Ahmed A."/>
            <person name="Ito M."/>
            <person name="Liu J."/>
            <person name="Hicks D.B."/>
            <person name="Pagni S."/>
            <person name="Fackelmayer O.J."/>
            <person name="Smith T.A."/>
            <person name="Earl J."/>
            <person name="Elbourne L.D."/>
            <person name="Hassan K."/>
            <person name="Paulsen I.T."/>
            <person name="Kolsto A.B."/>
            <person name="Tourasse N.J."/>
            <person name="Ehrlich G.D."/>
            <person name="Boissy R."/>
            <person name="Ivey D.M."/>
            <person name="Li G."/>
            <person name="Xue Y."/>
            <person name="Ma Y."/>
            <person name="Hu F.Z."/>
            <person name="Krulwich T.A."/>
        </authorList>
    </citation>
    <scope>NUCLEOTIDE SEQUENCE [LARGE SCALE GENOMIC DNA]</scope>
    <source>
        <strain>ATCC BAA-2126 / JCM 17055 / OF4</strain>
    </source>
</reference>
<reference key="4">
    <citation type="journal article" date="2007" name="J. Bacteriol.">
        <title>Catalytic properties of Staphylococcus aureus and Bacillus members of the secondary cation/proton antiporter-3 (Mrp) family are revealed by an optimized assay in an Escherichia coli host.</title>
        <authorList>
            <person name="Swartz T.H."/>
            <person name="Ito M."/>
            <person name="Ohira T."/>
            <person name="Natsui S."/>
            <person name="Hicks D.B."/>
            <person name="Krulwich T.A."/>
        </authorList>
    </citation>
    <scope>CHARACTERIZATION</scope>
    <scope>PROBABLE FUNCTION IN ELECTROGENIC ANTIPORTER ACTIVITY</scope>
</reference>
<gene>
    <name type="primary">mrpD</name>
    <name type="ordered locus">BpOF4_13195</name>
</gene>
<dbReference type="EMBL" id="AF097740">
    <property type="protein sequence ID" value="AAF21815.2"/>
    <property type="molecule type" value="Genomic_DNA"/>
</dbReference>
<dbReference type="EMBL" id="CP001878">
    <property type="protein sequence ID" value="ADC50690.1"/>
    <property type="molecule type" value="Genomic_DNA"/>
</dbReference>
<dbReference type="RefSeq" id="WP_012958053.1">
    <property type="nucleotide sequence ID" value="NC_013791.2"/>
</dbReference>
<dbReference type="SMR" id="Q9RGZ2"/>
<dbReference type="STRING" id="398511.BpOF4_13195"/>
<dbReference type="KEGG" id="bpf:BpOF4_13195"/>
<dbReference type="eggNOG" id="COG0651">
    <property type="taxonomic scope" value="Bacteria"/>
</dbReference>
<dbReference type="HOGENOM" id="CLU_007100_9_2_9"/>
<dbReference type="Proteomes" id="UP000001544">
    <property type="component" value="Chromosome"/>
</dbReference>
<dbReference type="GO" id="GO:0005886">
    <property type="term" value="C:plasma membrane"/>
    <property type="evidence" value="ECO:0007669"/>
    <property type="project" value="UniProtKB-SubCell"/>
</dbReference>
<dbReference type="GO" id="GO:0015297">
    <property type="term" value="F:antiporter activity"/>
    <property type="evidence" value="ECO:0007669"/>
    <property type="project" value="UniProtKB-KW"/>
</dbReference>
<dbReference type="GO" id="GO:0008137">
    <property type="term" value="F:NADH dehydrogenase (ubiquinone) activity"/>
    <property type="evidence" value="ECO:0007669"/>
    <property type="project" value="InterPro"/>
</dbReference>
<dbReference type="GO" id="GO:0042773">
    <property type="term" value="P:ATP synthesis coupled electron transport"/>
    <property type="evidence" value="ECO:0007669"/>
    <property type="project" value="InterPro"/>
</dbReference>
<dbReference type="GO" id="GO:0006814">
    <property type="term" value="P:sodium ion transport"/>
    <property type="evidence" value="ECO:0007669"/>
    <property type="project" value="UniProtKB-KW"/>
</dbReference>
<dbReference type="InterPro" id="IPR050586">
    <property type="entry name" value="CPA3_Na-H_Antiporter_D"/>
</dbReference>
<dbReference type="InterPro" id="IPR003918">
    <property type="entry name" value="NADH_UbQ_OxRdtase"/>
</dbReference>
<dbReference type="InterPro" id="IPR001750">
    <property type="entry name" value="ND/Mrp_TM"/>
</dbReference>
<dbReference type="NCBIfam" id="NF005818">
    <property type="entry name" value="PRK07691.1"/>
    <property type="match status" value="1"/>
</dbReference>
<dbReference type="NCBIfam" id="NF009306">
    <property type="entry name" value="PRK12663.1"/>
    <property type="match status" value="1"/>
</dbReference>
<dbReference type="PANTHER" id="PTHR42703:SF1">
    <property type="entry name" value="NA(+)_H(+) ANTIPORTER SUBUNIT D1"/>
    <property type="match status" value="1"/>
</dbReference>
<dbReference type="PANTHER" id="PTHR42703">
    <property type="entry name" value="NADH DEHYDROGENASE"/>
    <property type="match status" value="1"/>
</dbReference>
<dbReference type="Pfam" id="PF00361">
    <property type="entry name" value="Proton_antipo_M"/>
    <property type="match status" value="1"/>
</dbReference>
<dbReference type="PRINTS" id="PR01437">
    <property type="entry name" value="NUOXDRDTASE4"/>
</dbReference>
<accession>Q9RGZ2</accession>
<accession>D3FXH9</accession>
<sequence length="493" mass="54444">MNNLVILPILIPFIVGSFLILFAKHHSLQRVISGFAVVGMLLVSIYLAVDVYQNGITVLELGNWQAPFGIVLVADLFATMMVILASIVGVVCLFFAFQTISSEREKYYFYPFYFFLLAGVNGAFLTGDLFNLFVFFEVMLIASYILIVLGGTKYQLRESLKYVVINVFASILFIVGVAYIYSITGTLNMADLAVKVGELEQTGVLNVIAVIFLVVFAMKGGLFPLYFWLPRSYFGPPAAIAALFGGLLTKVGIYAIMRTFTLIFNHDPGFTHTLILILAGLTMFFGVLGAVSQFDFKRILSYHIISQVGYMVMGLGIYTQLAIAGAIYYIAHHIIVKAALFLFAGATQRITGTTDLKKMGGLLKTHPWLAWMFFISAISLAGIPPLSGFFSKFALILAAFLNENYIIAAVALAVGLLTLFSMMKIFIYAFWGEQKHTEEQANFKVGKLLLPIVPLVALTIILGFAAEPIFQYSLQVADQILDPTIYIESVLKE</sequence>
<comment type="function">
    <text>Mnh complex is a Na(+)Li(+)/H(+) antiporter involved in Na(+) and/or Li(+) excretion and Na(+) resistance. Na(+)/H(+) antiport consumes a transmembrane electrical potential, and is thus inferred to be electrogenic. Does not transport K(+), Ca(2+) or Mg(2+).</text>
</comment>
<comment type="function">
    <text>Mrp complex is a Na(+)/H(+) antiporter involved in Na(+) excretion and Na(+) resistance.</text>
</comment>
<comment type="subunit">
    <text evidence="1">Forms a heterooligomeric complex that consists of seven subunits: MrpA, MrpB, MrpC, MrpD, MrpE, MrpF and MrpG.</text>
</comment>
<comment type="subcellular location">
    <subcellularLocation>
        <location evidence="3">Cell membrane</location>
        <topology evidence="3">Multi-pass membrane protein</topology>
    </subcellularLocation>
</comment>
<comment type="miscellaneous">
    <text>Mrp-dependent antiport apparently occurs by a secondary, proton motive force-dependent mechanism, but the similarity of several Mrp proteins to membrane-embedded subunits of energy-coupled NADH dehydrogenase complexes raises the possibility that there is a capacity for electron transport that could provide a primary energy coupling option for Mrp functions.</text>
</comment>
<comment type="similarity">
    <text evidence="3">Belongs to the CPA3 antiporters (TC 2.A.63) subunit D family.</text>
</comment>
<proteinExistence type="evidence at protein level"/>
<organism>
    <name type="scientific">Alkalihalophilus pseudofirmus (strain ATCC BAA-2126 / JCM 17055 / OF4)</name>
    <name type="common">Bacillus pseudofirmus</name>
    <dbReference type="NCBI Taxonomy" id="398511"/>
    <lineage>
        <taxon>Bacteria</taxon>
        <taxon>Bacillati</taxon>
        <taxon>Bacillota</taxon>
        <taxon>Bacilli</taxon>
        <taxon>Bacillales</taxon>
        <taxon>Bacillaceae</taxon>
        <taxon>Alkalihalophilus</taxon>
    </lineage>
</organism>